<comment type="function">
    <text evidence="1">This protein is one of the early assembly proteins of the 50S ribosomal subunit, although it is not seen to bind rRNA by itself. It is important during the early stages of 50S assembly.</text>
</comment>
<comment type="subunit">
    <text evidence="1">Part of the 50S ribosomal subunit.</text>
</comment>
<comment type="similarity">
    <text evidence="1">Belongs to the universal ribosomal protein uL13 family.</text>
</comment>
<organism>
    <name type="scientific">Synechococcus sp. (strain CC9605)</name>
    <dbReference type="NCBI Taxonomy" id="110662"/>
    <lineage>
        <taxon>Bacteria</taxon>
        <taxon>Bacillati</taxon>
        <taxon>Cyanobacteriota</taxon>
        <taxon>Cyanophyceae</taxon>
        <taxon>Synechococcales</taxon>
        <taxon>Synechococcaceae</taxon>
        <taxon>Synechococcus</taxon>
    </lineage>
</organism>
<keyword id="KW-0687">Ribonucleoprotein</keyword>
<keyword id="KW-0689">Ribosomal protein</keyword>
<sequence>MNKTSLPPIDSIDRQWYVVDAENQTLGRLATEVAAVLRGKTNPSFTPHLDTGDFVVVVNAEKIKVSGRKPQQKLYRRHSGRPGGMKVETFEALQERIPERIVEKAIKGMLPHNALGRQMFRKLKVYKGTEHPHAAQKPQPLQLNPSASAQ</sequence>
<feature type="chain" id="PRO_0000261808" description="Large ribosomal subunit protein uL13">
    <location>
        <begin position="1"/>
        <end position="150"/>
    </location>
</feature>
<feature type="region of interest" description="Disordered" evidence="2">
    <location>
        <begin position="129"/>
        <end position="150"/>
    </location>
</feature>
<feature type="compositionally biased region" description="Polar residues" evidence="2">
    <location>
        <begin position="139"/>
        <end position="150"/>
    </location>
</feature>
<reference key="1">
    <citation type="submission" date="2005-07" db="EMBL/GenBank/DDBJ databases">
        <title>Complete sequence of Synechococcus sp. CC9605.</title>
        <authorList>
            <consortium name="US DOE Joint Genome Institute"/>
            <person name="Copeland A."/>
            <person name="Lucas S."/>
            <person name="Lapidus A."/>
            <person name="Barry K."/>
            <person name="Detter J.C."/>
            <person name="Glavina T."/>
            <person name="Hammon N."/>
            <person name="Israni S."/>
            <person name="Pitluck S."/>
            <person name="Schmutz J."/>
            <person name="Martinez M."/>
            <person name="Larimer F."/>
            <person name="Land M."/>
            <person name="Kyrpides N."/>
            <person name="Ivanova N."/>
            <person name="Richardson P."/>
        </authorList>
    </citation>
    <scope>NUCLEOTIDE SEQUENCE [LARGE SCALE GENOMIC DNA]</scope>
    <source>
        <strain>CC9605</strain>
    </source>
</reference>
<evidence type="ECO:0000255" key="1">
    <source>
        <dbReference type="HAMAP-Rule" id="MF_01366"/>
    </source>
</evidence>
<evidence type="ECO:0000256" key="2">
    <source>
        <dbReference type="SAM" id="MobiDB-lite"/>
    </source>
</evidence>
<evidence type="ECO:0000305" key="3"/>
<name>RL13_SYNSC</name>
<proteinExistence type="inferred from homology"/>
<accession>Q3AMQ6</accession>
<dbReference type="EMBL" id="CP000110">
    <property type="protein sequence ID" value="ABB34126.1"/>
    <property type="molecule type" value="Genomic_DNA"/>
</dbReference>
<dbReference type="RefSeq" id="WP_011363372.1">
    <property type="nucleotide sequence ID" value="NC_007516.1"/>
</dbReference>
<dbReference type="SMR" id="Q3AMQ6"/>
<dbReference type="STRING" id="110662.Syncc9605_0350"/>
<dbReference type="KEGG" id="syd:Syncc9605_0350"/>
<dbReference type="eggNOG" id="COG0102">
    <property type="taxonomic scope" value="Bacteria"/>
</dbReference>
<dbReference type="HOGENOM" id="CLU_082184_2_2_3"/>
<dbReference type="OrthoDB" id="9801330at2"/>
<dbReference type="GO" id="GO:0022625">
    <property type="term" value="C:cytosolic large ribosomal subunit"/>
    <property type="evidence" value="ECO:0007669"/>
    <property type="project" value="TreeGrafter"/>
</dbReference>
<dbReference type="GO" id="GO:0003729">
    <property type="term" value="F:mRNA binding"/>
    <property type="evidence" value="ECO:0007669"/>
    <property type="project" value="TreeGrafter"/>
</dbReference>
<dbReference type="GO" id="GO:0003735">
    <property type="term" value="F:structural constituent of ribosome"/>
    <property type="evidence" value="ECO:0007669"/>
    <property type="project" value="InterPro"/>
</dbReference>
<dbReference type="GO" id="GO:0017148">
    <property type="term" value="P:negative regulation of translation"/>
    <property type="evidence" value="ECO:0007669"/>
    <property type="project" value="TreeGrafter"/>
</dbReference>
<dbReference type="GO" id="GO:0006412">
    <property type="term" value="P:translation"/>
    <property type="evidence" value="ECO:0007669"/>
    <property type="project" value="UniProtKB-UniRule"/>
</dbReference>
<dbReference type="CDD" id="cd00392">
    <property type="entry name" value="Ribosomal_L13"/>
    <property type="match status" value="1"/>
</dbReference>
<dbReference type="FunFam" id="3.90.1180.10:FF:000001">
    <property type="entry name" value="50S ribosomal protein L13"/>
    <property type="match status" value="1"/>
</dbReference>
<dbReference type="Gene3D" id="3.90.1180.10">
    <property type="entry name" value="Ribosomal protein L13"/>
    <property type="match status" value="1"/>
</dbReference>
<dbReference type="HAMAP" id="MF_01366">
    <property type="entry name" value="Ribosomal_uL13"/>
    <property type="match status" value="1"/>
</dbReference>
<dbReference type="InterPro" id="IPR005822">
    <property type="entry name" value="Ribosomal_uL13"/>
</dbReference>
<dbReference type="InterPro" id="IPR005823">
    <property type="entry name" value="Ribosomal_uL13_bac-type"/>
</dbReference>
<dbReference type="InterPro" id="IPR023563">
    <property type="entry name" value="Ribosomal_uL13_CS"/>
</dbReference>
<dbReference type="InterPro" id="IPR036899">
    <property type="entry name" value="Ribosomal_uL13_sf"/>
</dbReference>
<dbReference type="NCBIfam" id="TIGR01066">
    <property type="entry name" value="rplM_bact"/>
    <property type="match status" value="1"/>
</dbReference>
<dbReference type="PANTHER" id="PTHR11545:SF2">
    <property type="entry name" value="LARGE RIBOSOMAL SUBUNIT PROTEIN UL13M"/>
    <property type="match status" value="1"/>
</dbReference>
<dbReference type="PANTHER" id="PTHR11545">
    <property type="entry name" value="RIBOSOMAL PROTEIN L13"/>
    <property type="match status" value="1"/>
</dbReference>
<dbReference type="Pfam" id="PF00572">
    <property type="entry name" value="Ribosomal_L13"/>
    <property type="match status" value="1"/>
</dbReference>
<dbReference type="PIRSF" id="PIRSF002181">
    <property type="entry name" value="Ribosomal_L13"/>
    <property type="match status" value="1"/>
</dbReference>
<dbReference type="SUPFAM" id="SSF52161">
    <property type="entry name" value="Ribosomal protein L13"/>
    <property type="match status" value="1"/>
</dbReference>
<dbReference type="PROSITE" id="PS00783">
    <property type="entry name" value="RIBOSOMAL_L13"/>
    <property type="match status" value="1"/>
</dbReference>
<protein>
    <recommendedName>
        <fullName evidence="1">Large ribosomal subunit protein uL13</fullName>
    </recommendedName>
    <alternativeName>
        <fullName evidence="3">50S ribosomal protein L13</fullName>
    </alternativeName>
</protein>
<gene>
    <name evidence="1" type="primary">rplM</name>
    <name evidence="1" type="synonym">rpl13</name>
    <name type="ordered locus">Syncc9605_0350</name>
</gene>